<evidence type="ECO:0000250" key="1">
    <source>
        <dbReference type="UniProtKB" id="Q695P6"/>
    </source>
</evidence>
<evidence type="ECO:0000255" key="2"/>
<evidence type="ECO:0000255" key="3">
    <source>
        <dbReference type="PROSITE-ProRule" id="PRU00521"/>
    </source>
</evidence>
<evidence type="ECO:0000269" key="4">
    <source>
    </source>
</evidence>
<evidence type="ECO:0000269" key="5">
    <source>
    </source>
</evidence>
<evidence type="ECO:0000269" key="6">
    <source>
    </source>
</evidence>
<evidence type="ECO:0000269" key="7">
    <source>
    </source>
</evidence>
<evidence type="ECO:0000269" key="8">
    <source>
    </source>
</evidence>
<evidence type="ECO:0000269" key="9">
    <source>
    </source>
</evidence>
<evidence type="ECO:0000269" key="10">
    <source>
    </source>
</evidence>
<evidence type="ECO:0000269" key="11">
    <source>
    </source>
</evidence>
<gene>
    <name type="primary">C5AR2</name>
    <name type="synonym">C5L2</name>
    <name type="synonym">GPR77</name>
</gene>
<keyword id="KW-1003">Cell membrane</keyword>
<keyword id="KW-1015">Disulfide bond</keyword>
<keyword id="KW-0297">G-protein coupled receptor</keyword>
<keyword id="KW-0325">Glycoprotein</keyword>
<keyword id="KW-0472">Membrane</keyword>
<keyword id="KW-0597">Phosphoprotein</keyword>
<keyword id="KW-1267">Proteomics identification</keyword>
<keyword id="KW-0675">Receptor</keyword>
<keyword id="KW-1185">Reference proteome</keyword>
<keyword id="KW-0807">Transducer</keyword>
<keyword id="KW-0812">Transmembrane</keyword>
<keyword id="KW-1133">Transmembrane helix</keyword>
<protein>
    <recommendedName>
        <fullName>C5a anaphylatoxin chemotactic receptor 2</fullName>
    </recommendedName>
    <alternativeName>
        <fullName>Complement component 5a receptor 2</fullName>
    </alternativeName>
    <alternativeName>
        <fullName>G-protein coupled receptor 77</fullName>
    </alternativeName>
</protein>
<name>C5AR2_HUMAN</name>
<proteinExistence type="evidence at protein level"/>
<accession>Q9P296</accession>
<accession>B2RA09</accession>
<dbReference type="EMBL" id="AB038237">
    <property type="protein sequence ID" value="BAA95414.1"/>
    <property type="molecule type" value="mRNA"/>
</dbReference>
<dbReference type="EMBL" id="AF317655">
    <property type="protein sequence ID" value="AAK12640.1"/>
    <property type="molecule type" value="Genomic_DNA"/>
</dbReference>
<dbReference type="EMBL" id="AY268430">
    <property type="protein sequence ID" value="AAP23197.1"/>
    <property type="molecule type" value="Genomic_DNA"/>
</dbReference>
<dbReference type="EMBL" id="AK313994">
    <property type="protein sequence ID" value="BAG36706.1"/>
    <property type="molecule type" value="mRNA"/>
</dbReference>
<dbReference type="EMBL" id="AC008754">
    <property type="status" value="NOT_ANNOTATED_CDS"/>
    <property type="molecule type" value="Genomic_DNA"/>
</dbReference>
<dbReference type="EMBL" id="CH471126">
    <property type="protein sequence ID" value="EAW57472.1"/>
    <property type="molecule type" value="Genomic_DNA"/>
</dbReference>
<dbReference type="EMBL" id="BC067478">
    <property type="protein sequence ID" value="AAH67478.1"/>
    <property type="molecule type" value="mRNA"/>
</dbReference>
<dbReference type="CCDS" id="CCDS12699.1"/>
<dbReference type="RefSeq" id="NP_001258678.1">
    <property type="nucleotide sequence ID" value="NM_001271749.2"/>
</dbReference>
<dbReference type="RefSeq" id="NP_001258679.1">
    <property type="nucleotide sequence ID" value="NM_001271750.2"/>
</dbReference>
<dbReference type="RefSeq" id="NP_060955.1">
    <property type="nucleotide sequence ID" value="NM_018485.3"/>
</dbReference>
<dbReference type="RefSeq" id="XP_011525038.1">
    <property type="nucleotide sequence ID" value="XM_011526736.2"/>
</dbReference>
<dbReference type="SMR" id="Q9P296"/>
<dbReference type="BioGRID" id="118077">
    <property type="interactions" value="309"/>
</dbReference>
<dbReference type="CORUM" id="Q9P296"/>
<dbReference type="FunCoup" id="Q9P296">
    <property type="interactions" value="263"/>
</dbReference>
<dbReference type="IntAct" id="Q9P296">
    <property type="interactions" value="75"/>
</dbReference>
<dbReference type="MINT" id="Q9P296"/>
<dbReference type="STRING" id="9606.ENSP00000472620"/>
<dbReference type="ChEMBL" id="CHEMBL4523478"/>
<dbReference type="GuidetoPHARMACOLOGY" id="33"/>
<dbReference type="GlyCosmos" id="Q9P296">
    <property type="glycosylation" value="1 site, No reported glycans"/>
</dbReference>
<dbReference type="GlyGen" id="Q9P296">
    <property type="glycosylation" value="1 site"/>
</dbReference>
<dbReference type="iPTMnet" id="Q9P296"/>
<dbReference type="PhosphoSitePlus" id="Q9P296"/>
<dbReference type="SwissPalm" id="Q9P296"/>
<dbReference type="BioMuta" id="C5AR2"/>
<dbReference type="DMDM" id="20137533"/>
<dbReference type="jPOST" id="Q9P296"/>
<dbReference type="MassIVE" id="Q9P296"/>
<dbReference type="PaxDb" id="9606-ENSP00000472620"/>
<dbReference type="PeptideAtlas" id="Q9P296"/>
<dbReference type="ProteomicsDB" id="83760"/>
<dbReference type="Antibodypedia" id="2937">
    <property type="antibodies" value="419 antibodies from 37 providers"/>
</dbReference>
<dbReference type="DNASU" id="27202"/>
<dbReference type="Ensembl" id="ENST00000595464.3">
    <property type="protein sequence ID" value="ENSP00000472620.1"/>
    <property type="gene ID" value="ENSG00000134830.6"/>
</dbReference>
<dbReference type="Ensembl" id="ENST00000600626.1">
    <property type="protein sequence ID" value="ENSP00000471184.1"/>
    <property type="gene ID" value="ENSG00000134830.6"/>
</dbReference>
<dbReference type="GeneID" id="27202"/>
<dbReference type="KEGG" id="hsa:27202"/>
<dbReference type="MANE-Select" id="ENST00000595464.3">
    <property type="protein sequence ID" value="ENSP00000472620.1"/>
    <property type="RefSeq nucleotide sequence ID" value="NM_001271749.2"/>
    <property type="RefSeq protein sequence ID" value="NP_001258678.1"/>
</dbReference>
<dbReference type="UCSC" id="uc002pgk.3">
    <property type="organism name" value="human"/>
</dbReference>
<dbReference type="AGR" id="HGNC:4527"/>
<dbReference type="CTD" id="27202"/>
<dbReference type="DisGeNET" id="27202"/>
<dbReference type="GeneCards" id="C5AR2"/>
<dbReference type="HGNC" id="HGNC:4527">
    <property type="gene designation" value="C5AR2"/>
</dbReference>
<dbReference type="HPA" id="ENSG00000134830">
    <property type="expression patterns" value="Tissue enhanced (lymphoid)"/>
</dbReference>
<dbReference type="MalaCards" id="C5AR2"/>
<dbReference type="MIM" id="609949">
    <property type="type" value="gene"/>
</dbReference>
<dbReference type="neXtProt" id="NX_Q9P296"/>
<dbReference type="OpenTargets" id="ENSG00000134830"/>
<dbReference type="PharmGKB" id="PA28920"/>
<dbReference type="VEuPathDB" id="HostDB:ENSG00000134830"/>
<dbReference type="eggNOG" id="ENOG502R35Z">
    <property type="taxonomic scope" value="Eukaryota"/>
</dbReference>
<dbReference type="GeneTree" id="ENSGT01130000278339"/>
<dbReference type="HOGENOM" id="CLU_009579_8_0_1"/>
<dbReference type="InParanoid" id="Q9P296"/>
<dbReference type="OMA" id="AWMENTS"/>
<dbReference type="OrthoDB" id="9835842at2759"/>
<dbReference type="PAN-GO" id="Q9P296">
    <property type="GO annotations" value="7 GO annotations based on evolutionary models"/>
</dbReference>
<dbReference type="PhylomeDB" id="Q9P296"/>
<dbReference type="TreeFam" id="TF330976"/>
<dbReference type="PathwayCommons" id="Q9P296"/>
<dbReference type="Reactome" id="R-HSA-375276">
    <property type="pathway name" value="Peptide ligand-binding receptors"/>
</dbReference>
<dbReference type="Reactome" id="R-HSA-977606">
    <property type="pathway name" value="Regulation of Complement cascade"/>
</dbReference>
<dbReference type="SignaLink" id="Q9P296"/>
<dbReference type="SIGNOR" id="Q9P296"/>
<dbReference type="BioGRID-ORCS" id="27202">
    <property type="hits" value="11 hits in 1137 CRISPR screens"/>
</dbReference>
<dbReference type="ChiTaRS" id="C5AR2">
    <property type="organism name" value="human"/>
</dbReference>
<dbReference type="GeneWiki" id="GPR77"/>
<dbReference type="GenomeRNAi" id="27202"/>
<dbReference type="Pharos" id="Q9P296">
    <property type="development level" value="Tbio"/>
</dbReference>
<dbReference type="PRO" id="PR:Q9P296"/>
<dbReference type="Proteomes" id="UP000005640">
    <property type="component" value="Chromosome 19"/>
</dbReference>
<dbReference type="RNAct" id="Q9P296">
    <property type="molecule type" value="protein"/>
</dbReference>
<dbReference type="Bgee" id="ENSG00000134830">
    <property type="expression patterns" value="Expressed in monocyte and 92 other cell types or tissues"/>
</dbReference>
<dbReference type="GO" id="GO:0045177">
    <property type="term" value="C:apical part of cell"/>
    <property type="evidence" value="ECO:0000314"/>
    <property type="project" value="UniProtKB"/>
</dbReference>
<dbReference type="GO" id="GO:0009925">
    <property type="term" value="C:basal plasma membrane"/>
    <property type="evidence" value="ECO:0000314"/>
    <property type="project" value="UniProtKB"/>
</dbReference>
<dbReference type="GO" id="GO:0005886">
    <property type="term" value="C:plasma membrane"/>
    <property type="evidence" value="ECO:0000318"/>
    <property type="project" value="GO_Central"/>
</dbReference>
<dbReference type="GO" id="GO:0004878">
    <property type="term" value="F:complement component C5a receptor activity"/>
    <property type="evidence" value="ECO:0000318"/>
    <property type="project" value="GO_Central"/>
</dbReference>
<dbReference type="GO" id="GO:0004930">
    <property type="term" value="F:G protein-coupled receptor activity"/>
    <property type="evidence" value="ECO:0000318"/>
    <property type="project" value="GO_Central"/>
</dbReference>
<dbReference type="GO" id="GO:0006935">
    <property type="term" value="P:chemotaxis"/>
    <property type="evidence" value="ECO:0007669"/>
    <property type="project" value="InterPro"/>
</dbReference>
<dbReference type="GO" id="GO:0002430">
    <property type="term" value="P:complement receptor mediated signaling pathway"/>
    <property type="evidence" value="ECO:0000318"/>
    <property type="project" value="GO_Central"/>
</dbReference>
<dbReference type="GO" id="GO:0006954">
    <property type="term" value="P:inflammatory response"/>
    <property type="evidence" value="ECO:0000318"/>
    <property type="project" value="GO_Central"/>
</dbReference>
<dbReference type="GO" id="GO:0032715">
    <property type="term" value="P:negative regulation of interleukin-6 production"/>
    <property type="evidence" value="ECO:0000315"/>
    <property type="project" value="UniProtKB"/>
</dbReference>
<dbReference type="GO" id="GO:0090024">
    <property type="term" value="P:negative regulation of neutrophil chemotaxis"/>
    <property type="evidence" value="ECO:0000315"/>
    <property type="project" value="UniProtKB"/>
</dbReference>
<dbReference type="GO" id="GO:0032720">
    <property type="term" value="P:negative regulation of tumor necrosis factor production"/>
    <property type="evidence" value="ECO:0000315"/>
    <property type="project" value="UniProtKB"/>
</dbReference>
<dbReference type="GO" id="GO:0007200">
    <property type="term" value="P:phospholipase C-activating G protein-coupled receptor signaling pathway"/>
    <property type="evidence" value="ECO:0000318"/>
    <property type="project" value="GO_Central"/>
</dbReference>
<dbReference type="GO" id="GO:0007204">
    <property type="term" value="P:positive regulation of cytosolic calcium ion concentration"/>
    <property type="evidence" value="ECO:0000318"/>
    <property type="project" value="GO_Central"/>
</dbReference>
<dbReference type="GO" id="GO:0032677">
    <property type="term" value="P:regulation of interleukin-8 production"/>
    <property type="evidence" value="ECO:0000315"/>
    <property type="project" value="UniProtKB"/>
</dbReference>
<dbReference type="CDD" id="cd15114">
    <property type="entry name" value="7tmA_C5aR"/>
    <property type="match status" value="1"/>
</dbReference>
<dbReference type="FunFam" id="1.20.1070.10:FF:000296">
    <property type="entry name" value="C5a anaphylatoxin chemotactic receptor 2"/>
    <property type="match status" value="1"/>
</dbReference>
<dbReference type="Gene3D" id="1.20.1070.10">
    <property type="entry name" value="Rhodopsin 7-helix transmembrane proteins"/>
    <property type="match status" value="1"/>
</dbReference>
<dbReference type="InterPro" id="IPR002234">
    <property type="entry name" value="Anphylx_rcpt_C3a/C5a1-2"/>
</dbReference>
<dbReference type="InterPro" id="IPR000826">
    <property type="entry name" value="Formyl_rcpt-rel"/>
</dbReference>
<dbReference type="InterPro" id="IPR000276">
    <property type="entry name" value="GPCR_Rhodpsn"/>
</dbReference>
<dbReference type="InterPro" id="IPR017452">
    <property type="entry name" value="GPCR_Rhodpsn_7TM"/>
</dbReference>
<dbReference type="PANTHER" id="PTHR24225:SF1">
    <property type="entry name" value="C5A ANAPHYLATOXIN CHEMOTACTIC RECEPTOR 2"/>
    <property type="match status" value="1"/>
</dbReference>
<dbReference type="PANTHER" id="PTHR24225">
    <property type="entry name" value="CHEMOTACTIC RECEPTOR"/>
    <property type="match status" value="1"/>
</dbReference>
<dbReference type="Pfam" id="PF00001">
    <property type="entry name" value="7tm_1"/>
    <property type="match status" value="1"/>
</dbReference>
<dbReference type="PRINTS" id="PR00426">
    <property type="entry name" value="C5ANPHYLTXNR"/>
</dbReference>
<dbReference type="PRINTS" id="PR00237">
    <property type="entry name" value="GPCRRHODOPSN"/>
</dbReference>
<dbReference type="SUPFAM" id="SSF81321">
    <property type="entry name" value="Family A G protein-coupled receptor-like"/>
    <property type="match status" value="1"/>
</dbReference>
<dbReference type="PROSITE" id="PS50262">
    <property type="entry name" value="G_PROTEIN_RECEP_F1_2"/>
    <property type="match status" value="1"/>
</dbReference>
<comment type="function">
    <text evidence="6 8 10">Receptor for the chemotactic and inflammatory C3a, C4a and C5a anaphylatoxin peptides and also for their dearginated forms ASP/C3adesArg, C4adesArg and C5adesArg respectively. Couples weakly to G(i)-mediated signaling pathways.</text>
</comment>
<comment type="subunit">
    <text evidence="7">Interacts with C3 (the anaphylatoxin peptide C3a and the adipogenic hormone ASP); the interaction occurs with higher affinity for ASP, enhancing the phosphorylation and activation of GPR77, recruitment of ARRB2 to the cell surface and endocytosis of GRP77.</text>
</comment>
<comment type="interaction">
    <interactant intactId="EBI-2874691">
        <id>Q9P296</id>
    </interactant>
    <interactant intactId="EBI-10303987">
        <id>Q9UHG0</id>
        <label>DCDC2</label>
    </interactant>
    <organismsDiffer>false</organismsDiffer>
    <experiments>3</experiments>
</comment>
<comment type="subcellular location">
    <subcellularLocation>
        <location evidence="10">Cell membrane</location>
        <topology evidence="10">Multi-pass membrane protein</topology>
    </subcellularLocation>
</comment>
<comment type="tissue specificity">
    <text evidence="4 5">Frontal cortex, hippocampus, hypothalamus, pons and liver.</text>
</comment>
<comment type="similarity">
    <text evidence="3">Belongs to the G-protein coupled receptor 1 family.</text>
</comment>
<organism>
    <name type="scientific">Homo sapiens</name>
    <name type="common">Human</name>
    <dbReference type="NCBI Taxonomy" id="9606"/>
    <lineage>
        <taxon>Eukaryota</taxon>
        <taxon>Metazoa</taxon>
        <taxon>Chordata</taxon>
        <taxon>Craniata</taxon>
        <taxon>Vertebrata</taxon>
        <taxon>Euteleostomi</taxon>
        <taxon>Mammalia</taxon>
        <taxon>Eutheria</taxon>
        <taxon>Euarchontoglires</taxon>
        <taxon>Primates</taxon>
        <taxon>Haplorrhini</taxon>
        <taxon>Catarrhini</taxon>
        <taxon>Hominidae</taxon>
        <taxon>Homo</taxon>
    </lineage>
</organism>
<sequence>MGNDSVSYEYGDYSDLSDRPVDCLDGACLAIDPLRVAPLPLYAAIFLVGVPGNAMVAWVAGKVARRRVGATWLLHLAVADLLCCLSLPILAVPIARGGHWPYGAVGCRALPSIILLTMYASVLLLAALSADLCFLALGPAWWSTVQRACGVQVACGAAWTLALLLTVPSAIYRRLHQEHFPARLQCVVDYGGSSSTENAVTAIRFLFGFLGPLVAVASCHSALLCWAARRCRPLGTAIVVGFFVCWAPYHLLGLVLTVAAPNSALLARALRAEPLIVGLALAHSCLNPMLFLYFGRAQLRRSLPAACHWALRESQGQDESVDSKKSTSHDLVSEMEV</sequence>
<reference key="1">
    <citation type="journal article" date="2000" name="Mol. Immunol.">
        <title>A putative chemoattractant receptor, C5L2, is expressed in granulocyte and immature dendritic cells, but not in mature dendritic cells.</title>
        <authorList>
            <person name="Ohno M."/>
            <person name="Hirata T."/>
            <person name="Enomoto M."/>
            <person name="Araki T."/>
            <person name="Ishimaru H."/>
            <person name="Takahashi T.A."/>
        </authorList>
    </citation>
    <scope>NUCLEOTIDE SEQUENCE [MRNA]</scope>
    <scope>TISSUE SPECIFICITY</scope>
    <source>
        <tissue>Placenta</tissue>
    </source>
</reference>
<reference key="2">
    <citation type="journal article" date="2001" name="Brain Res. Mol. Brain Res.">
        <title>Identification of four novel human G protein-coupled receptors expressed in the brain.</title>
        <authorList>
            <person name="Lee D.K."/>
            <person name="George S.R."/>
            <person name="Cheng R."/>
            <person name="Nguyen T."/>
            <person name="Liu Y."/>
            <person name="Brown M."/>
            <person name="Lynch K.R."/>
            <person name="O'Dowd B.F."/>
        </authorList>
    </citation>
    <scope>NUCLEOTIDE SEQUENCE [GENOMIC DNA]</scope>
    <scope>TISSUE SPECIFICITY</scope>
</reference>
<reference key="3">
    <citation type="submission" date="2003-04" db="EMBL/GenBank/DDBJ databases">
        <title>cDNA clones of human proteins involved in signal transduction sequenced by the Guthrie cDNA resource center (www.cdna.org).</title>
        <authorList>
            <person name="Kopatz S.A."/>
            <person name="Aronstam R.S."/>
            <person name="Sharma S.V."/>
        </authorList>
    </citation>
    <scope>NUCLEOTIDE SEQUENCE [GENOMIC DNA]</scope>
</reference>
<reference key="4">
    <citation type="journal article" date="2004" name="Nat. Genet.">
        <title>Complete sequencing and characterization of 21,243 full-length human cDNAs.</title>
        <authorList>
            <person name="Ota T."/>
            <person name="Suzuki Y."/>
            <person name="Nishikawa T."/>
            <person name="Otsuki T."/>
            <person name="Sugiyama T."/>
            <person name="Irie R."/>
            <person name="Wakamatsu A."/>
            <person name="Hayashi K."/>
            <person name="Sato H."/>
            <person name="Nagai K."/>
            <person name="Kimura K."/>
            <person name="Makita H."/>
            <person name="Sekine M."/>
            <person name="Obayashi M."/>
            <person name="Nishi T."/>
            <person name="Shibahara T."/>
            <person name="Tanaka T."/>
            <person name="Ishii S."/>
            <person name="Yamamoto J."/>
            <person name="Saito K."/>
            <person name="Kawai Y."/>
            <person name="Isono Y."/>
            <person name="Nakamura Y."/>
            <person name="Nagahari K."/>
            <person name="Murakami K."/>
            <person name="Yasuda T."/>
            <person name="Iwayanagi T."/>
            <person name="Wagatsuma M."/>
            <person name="Shiratori A."/>
            <person name="Sudo H."/>
            <person name="Hosoiri T."/>
            <person name="Kaku Y."/>
            <person name="Kodaira H."/>
            <person name="Kondo H."/>
            <person name="Sugawara M."/>
            <person name="Takahashi M."/>
            <person name="Kanda K."/>
            <person name="Yokoi T."/>
            <person name="Furuya T."/>
            <person name="Kikkawa E."/>
            <person name="Omura Y."/>
            <person name="Abe K."/>
            <person name="Kamihara K."/>
            <person name="Katsuta N."/>
            <person name="Sato K."/>
            <person name="Tanikawa M."/>
            <person name="Yamazaki M."/>
            <person name="Ninomiya K."/>
            <person name="Ishibashi T."/>
            <person name="Yamashita H."/>
            <person name="Murakawa K."/>
            <person name="Fujimori K."/>
            <person name="Tanai H."/>
            <person name="Kimata M."/>
            <person name="Watanabe M."/>
            <person name="Hiraoka S."/>
            <person name="Chiba Y."/>
            <person name="Ishida S."/>
            <person name="Ono Y."/>
            <person name="Takiguchi S."/>
            <person name="Watanabe S."/>
            <person name="Yosida M."/>
            <person name="Hotuta T."/>
            <person name="Kusano J."/>
            <person name="Kanehori K."/>
            <person name="Takahashi-Fujii A."/>
            <person name="Hara H."/>
            <person name="Tanase T.-O."/>
            <person name="Nomura Y."/>
            <person name="Togiya S."/>
            <person name="Komai F."/>
            <person name="Hara R."/>
            <person name="Takeuchi K."/>
            <person name="Arita M."/>
            <person name="Imose N."/>
            <person name="Musashino K."/>
            <person name="Yuuki H."/>
            <person name="Oshima A."/>
            <person name="Sasaki N."/>
            <person name="Aotsuka S."/>
            <person name="Yoshikawa Y."/>
            <person name="Matsunawa H."/>
            <person name="Ichihara T."/>
            <person name="Shiohata N."/>
            <person name="Sano S."/>
            <person name="Moriya S."/>
            <person name="Momiyama H."/>
            <person name="Satoh N."/>
            <person name="Takami S."/>
            <person name="Terashima Y."/>
            <person name="Suzuki O."/>
            <person name="Nakagawa S."/>
            <person name="Senoh A."/>
            <person name="Mizoguchi H."/>
            <person name="Goto Y."/>
            <person name="Shimizu F."/>
            <person name="Wakebe H."/>
            <person name="Hishigaki H."/>
            <person name="Watanabe T."/>
            <person name="Sugiyama A."/>
            <person name="Takemoto M."/>
            <person name="Kawakami B."/>
            <person name="Yamazaki M."/>
            <person name="Watanabe K."/>
            <person name="Kumagai A."/>
            <person name="Itakura S."/>
            <person name="Fukuzumi Y."/>
            <person name="Fujimori Y."/>
            <person name="Komiyama M."/>
            <person name="Tashiro H."/>
            <person name="Tanigami A."/>
            <person name="Fujiwara T."/>
            <person name="Ono T."/>
            <person name="Yamada K."/>
            <person name="Fujii Y."/>
            <person name="Ozaki K."/>
            <person name="Hirao M."/>
            <person name="Ohmori Y."/>
            <person name="Kawabata A."/>
            <person name="Hikiji T."/>
            <person name="Kobatake N."/>
            <person name="Inagaki H."/>
            <person name="Ikema Y."/>
            <person name="Okamoto S."/>
            <person name="Okitani R."/>
            <person name="Kawakami T."/>
            <person name="Noguchi S."/>
            <person name="Itoh T."/>
            <person name="Shigeta K."/>
            <person name="Senba T."/>
            <person name="Matsumura K."/>
            <person name="Nakajima Y."/>
            <person name="Mizuno T."/>
            <person name="Morinaga M."/>
            <person name="Sasaki M."/>
            <person name="Togashi T."/>
            <person name="Oyama M."/>
            <person name="Hata H."/>
            <person name="Watanabe M."/>
            <person name="Komatsu T."/>
            <person name="Mizushima-Sugano J."/>
            <person name="Satoh T."/>
            <person name="Shirai Y."/>
            <person name="Takahashi Y."/>
            <person name="Nakagawa K."/>
            <person name="Okumura K."/>
            <person name="Nagase T."/>
            <person name="Nomura N."/>
            <person name="Kikuchi H."/>
            <person name="Masuho Y."/>
            <person name="Yamashita R."/>
            <person name="Nakai K."/>
            <person name="Yada T."/>
            <person name="Nakamura Y."/>
            <person name="Ohara O."/>
            <person name="Isogai T."/>
            <person name="Sugano S."/>
        </authorList>
    </citation>
    <scope>NUCLEOTIDE SEQUENCE [LARGE SCALE MRNA]</scope>
    <source>
        <tissue>Trachea</tissue>
    </source>
</reference>
<reference key="5">
    <citation type="journal article" date="2004" name="Nature">
        <title>The DNA sequence and biology of human chromosome 19.</title>
        <authorList>
            <person name="Grimwood J."/>
            <person name="Gordon L.A."/>
            <person name="Olsen A.S."/>
            <person name="Terry A."/>
            <person name="Schmutz J."/>
            <person name="Lamerdin J.E."/>
            <person name="Hellsten U."/>
            <person name="Goodstein D."/>
            <person name="Couronne O."/>
            <person name="Tran-Gyamfi M."/>
            <person name="Aerts A."/>
            <person name="Altherr M."/>
            <person name="Ashworth L."/>
            <person name="Bajorek E."/>
            <person name="Black S."/>
            <person name="Branscomb E."/>
            <person name="Caenepeel S."/>
            <person name="Carrano A.V."/>
            <person name="Caoile C."/>
            <person name="Chan Y.M."/>
            <person name="Christensen M."/>
            <person name="Cleland C.A."/>
            <person name="Copeland A."/>
            <person name="Dalin E."/>
            <person name="Dehal P."/>
            <person name="Denys M."/>
            <person name="Detter J.C."/>
            <person name="Escobar J."/>
            <person name="Flowers D."/>
            <person name="Fotopulos D."/>
            <person name="Garcia C."/>
            <person name="Georgescu A.M."/>
            <person name="Glavina T."/>
            <person name="Gomez M."/>
            <person name="Gonzales E."/>
            <person name="Groza M."/>
            <person name="Hammon N."/>
            <person name="Hawkins T."/>
            <person name="Haydu L."/>
            <person name="Ho I."/>
            <person name="Huang W."/>
            <person name="Israni S."/>
            <person name="Jett J."/>
            <person name="Kadner K."/>
            <person name="Kimball H."/>
            <person name="Kobayashi A."/>
            <person name="Larionov V."/>
            <person name="Leem S.-H."/>
            <person name="Lopez F."/>
            <person name="Lou Y."/>
            <person name="Lowry S."/>
            <person name="Malfatti S."/>
            <person name="Martinez D."/>
            <person name="McCready P.M."/>
            <person name="Medina C."/>
            <person name="Morgan J."/>
            <person name="Nelson K."/>
            <person name="Nolan M."/>
            <person name="Ovcharenko I."/>
            <person name="Pitluck S."/>
            <person name="Pollard M."/>
            <person name="Popkie A.P."/>
            <person name="Predki P."/>
            <person name="Quan G."/>
            <person name="Ramirez L."/>
            <person name="Rash S."/>
            <person name="Retterer J."/>
            <person name="Rodriguez A."/>
            <person name="Rogers S."/>
            <person name="Salamov A."/>
            <person name="Salazar A."/>
            <person name="She X."/>
            <person name="Smith D."/>
            <person name="Slezak T."/>
            <person name="Solovyev V."/>
            <person name="Thayer N."/>
            <person name="Tice H."/>
            <person name="Tsai M."/>
            <person name="Ustaszewska A."/>
            <person name="Vo N."/>
            <person name="Wagner M."/>
            <person name="Wheeler J."/>
            <person name="Wu K."/>
            <person name="Xie G."/>
            <person name="Yang J."/>
            <person name="Dubchak I."/>
            <person name="Furey T.S."/>
            <person name="DeJong P."/>
            <person name="Dickson M."/>
            <person name="Gordon D."/>
            <person name="Eichler E.E."/>
            <person name="Pennacchio L.A."/>
            <person name="Richardson P."/>
            <person name="Stubbs L."/>
            <person name="Rokhsar D.S."/>
            <person name="Myers R.M."/>
            <person name="Rubin E.M."/>
            <person name="Lucas S.M."/>
        </authorList>
    </citation>
    <scope>NUCLEOTIDE SEQUENCE [LARGE SCALE GENOMIC DNA]</scope>
</reference>
<reference key="6">
    <citation type="submission" date="2005-07" db="EMBL/GenBank/DDBJ databases">
        <authorList>
            <person name="Mural R.J."/>
            <person name="Istrail S."/>
            <person name="Sutton G.G."/>
            <person name="Florea L."/>
            <person name="Halpern A.L."/>
            <person name="Mobarry C.M."/>
            <person name="Lippert R."/>
            <person name="Walenz B."/>
            <person name="Shatkay H."/>
            <person name="Dew I."/>
            <person name="Miller J.R."/>
            <person name="Flanigan M.J."/>
            <person name="Edwards N.J."/>
            <person name="Bolanos R."/>
            <person name="Fasulo D."/>
            <person name="Halldorsson B.V."/>
            <person name="Hannenhalli S."/>
            <person name="Turner R."/>
            <person name="Yooseph S."/>
            <person name="Lu F."/>
            <person name="Nusskern D.R."/>
            <person name="Shue B.C."/>
            <person name="Zheng X.H."/>
            <person name="Zhong F."/>
            <person name="Delcher A.L."/>
            <person name="Huson D.H."/>
            <person name="Kravitz S.A."/>
            <person name="Mouchard L."/>
            <person name="Reinert K."/>
            <person name="Remington K.A."/>
            <person name="Clark A.G."/>
            <person name="Waterman M.S."/>
            <person name="Eichler E.E."/>
            <person name="Adams M.D."/>
            <person name="Hunkapiller M.W."/>
            <person name="Myers E.W."/>
            <person name="Venter J.C."/>
        </authorList>
    </citation>
    <scope>NUCLEOTIDE SEQUENCE [LARGE SCALE GENOMIC DNA]</scope>
</reference>
<reference key="7">
    <citation type="journal article" date="2004" name="Genome Res.">
        <title>The status, quality, and expansion of the NIH full-length cDNA project: the Mammalian Gene Collection (MGC).</title>
        <authorList>
            <consortium name="The MGC Project Team"/>
        </authorList>
    </citation>
    <scope>NUCLEOTIDE SEQUENCE [LARGE SCALE MRNA]</scope>
</reference>
<reference key="8">
    <citation type="journal article" date="2002" name="J. Biol. Chem.">
        <title>The orphan receptor C5L2 has high affinity binding sites for complement fragments C5a and C5a des Arg(74).</title>
        <authorList>
            <person name="Cain S.A."/>
            <person name="Monk P.N."/>
        </authorList>
    </citation>
    <scope>FUNCTION</scope>
    <source>
        <tissue>Brain</tissue>
    </source>
</reference>
<reference key="9">
    <citation type="journal article" date="2003" name="J. Biol. Chem.">
        <title>The chemoattractant receptor-like protein C5L2 binds the C3a des-Arg77/acylation-stimulating protein.</title>
        <authorList>
            <person name="Kalant D."/>
            <person name="Cain S.A."/>
            <person name="Maslowska M."/>
            <person name="Sniderman A.D."/>
            <person name="Cianflone K."/>
            <person name="Monk P.N."/>
        </authorList>
    </citation>
    <scope>INTERACTION WITH C3 ADIOPOGENIC PEPTIDE ASP</scope>
</reference>
<reference key="10">
    <citation type="journal article" date="2005" name="J. Biol. Chem.">
        <title>C5L2 is a functional receptor for acylation-stimulating protein.</title>
        <authorList>
            <person name="Kalant D."/>
            <person name="MacLaren R."/>
            <person name="Cui W."/>
            <person name="Samanta R."/>
            <person name="Monk P.N."/>
            <person name="Laporte S.A."/>
            <person name="Cianflone K."/>
        </authorList>
    </citation>
    <scope>FUNCTION AS A RECEPTOR FOR THE C3 ADIOPOGENIC PEPTIDE ASP</scope>
</reference>
<reference key="11">
    <citation type="journal article" date="2009" name="Mol. Immunol.">
        <title>C5a- and ASP-mediated C5L2 activation, endocytosis and recycling are lost in S323I-C5L2 mutation.</title>
        <authorList>
            <person name="Cui W."/>
            <person name="Simaan M."/>
            <person name="Laporte S."/>
            <person name="Lodge R."/>
            <person name="Cianflone K."/>
        </authorList>
    </citation>
    <scope>FUNCTION</scope>
    <scope>SUBCELLULAR LOCATION</scope>
    <scope>CHARACTERIZATION OF VARIANT ILE-323</scope>
</reference>
<reference key="12">
    <citation type="journal article" date="2006" name="Arterioscler. Thromb. Vasc. Biol.">
        <title>Identification of a novel C5L2 variant (S323I) in a French Canadian family with familial combined hyperlipemia.</title>
        <authorList>
            <person name="Marcil M."/>
            <person name="Vu H."/>
            <person name="Cui W."/>
            <person name="Dastani Z."/>
            <person name="Engert J.C."/>
            <person name="Gaudet D."/>
            <person name="Castro-Cabezas M."/>
            <person name="Sniderman A.D."/>
            <person name="Genest J. Jr."/>
            <person name="Cianflone K."/>
        </authorList>
    </citation>
    <scope>VARIANT ILE-323</scope>
</reference>
<reference key="13">
    <citation type="journal article" date="2011" name="PLoS ONE">
        <title>Relationship between a novel polymorphism of the C5L2 gene and coronary artery disease.</title>
        <authorList>
            <person name="Zheng Y.Y."/>
            <person name="Xie X."/>
            <person name="Ma Y.T."/>
            <person name="Yang Y.N."/>
            <person name="Fu Z.Y."/>
            <person name="Li X.M."/>
            <person name="Ma X."/>
            <person name="Chen B.D."/>
            <person name="Liu F."/>
        </authorList>
    </citation>
    <scope>VARIANT LEU-233</scope>
</reference>
<feature type="chain" id="PRO_0000069216" description="C5a anaphylatoxin chemotactic receptor 2">
    <location>
        <begin position="1"/>
        <end position="337"/>
    </location>
</feature>
<feature type="topological domain" description="Extracellular" evidence="2">
    <location>
        <begin position="1"/>
        <end position="38"/>
    </location>
</feature>
<feature type="transmembrane region" description="Helical; Name=1" evidence="2">
    <location>
        <begin position="39"/>
        <end position="61"/>
    </location>
</feature>
<feature type="topological domain" description="Cytoplasmic" evidence="2">
    <location>
        <begin position="62"/>
        <end position="72"/>
    </location>
</feature>
<feature type="transmembrane region" description="Helical; Name=2" evidence="2">
    <location>
        <begin position="73"/>
        <end position="95"/>
    </location>
</feature>
<feature type="topological domain" description="Extracellular" evidence="2">
    <location>
        <begin position="96"/>
        <end position="114"/>
    </location>
</feature>
<feature type="transmembrane region" description="Helical; Name=3" evidence="2">
    <location>
        <begin position="115"/>
        <end position="137"/>
    </location>
</feature>
<feature type="topological domain" description="Cytoplasmic" evidence="2">
    <location>
        <begin position="138"/>
        <end position="149"/>
    </location>
</feature>
<feature type="transmembrane region" description="Helical; Name=4" evidence="2">
    <location>
        <begin position="150"/>
        <end position="172"/>
    </location>
</feature>
<feature type="topological domain" description="Extracellular" evidence="2">
    <location>
        <begin position="173"/>
        <end position="202"/>
    </location>
</feature>
<feature type="transmembrane region" description="Helical; Name=5" evidence="2">
    <location>
        <begin position="203"/>
        <end position="225"/>
    </location>
</feature>
<feature type="topological domain" description="Cytoplasmic" evidence="2">
    <location>
        <begin position="226"/>
        <end position="237"/>
    </location>
</feature>
<feature type="transmembrane region" description="Helical; Name=6" evidence="2">
    <location>
        <begin position="238"/>
        <end position="260"/>
    </location>
</feature>
<feature type="topological domain" description="Extracellular" evidence="2">
    <location>
        <begin position="261"/>
        <end position="274"/>
    </location>
</feature>
<feature type="transmembrane region" description="Helical; Name=7" evidence="2">
    <location>
        <begin position="275"/>
        <end position="294"/>
    </location>
</feature>
<feature type="topological domain" description="Cytoplasmic" evidence="2">
    <location>
        <begin position="295"/>
        <end position="337"/>
    </location>
</feature>
<feature type="modified residue" description="Phosphoserine" evidence="1">
    <location>
        <position position="320"/>
    </location>
</feature>
<feature type="glycosylation site" description="N-linked (GlcNAc...) asparagine" evidence="2">
    <location>
        <position position="3"/>
    </location>
</feature>
<feature type="disulfide bond" evidence="3">
    <location>
        <begin position="107"/>
        <end position="186"/>
    </location>
</feature>
<feature type="sequence variant" id="VAR_068748" description="In dbSNP:rs149572881." evidence="11">
    <original>P</original>
    <variation>L</variation>
    <location>
        <position position="233"/>
    </location>
</feature>
<feature type="sequence variant" id="VAR_068749" description="Found in a family with familial combined hyperlipemia; uncertain significance; correlated with increased plasma triglyceride, plasma cholesterol, low-density lipoprotein cholesterol, apolipoprotein B and ASP; dbSNP:rs150599989." evidence="9 10">
    <original>S</original>
    <variation>I</variation>
    <location>
        <position position="323"/>
    </location>
</feature>